<evidence type="ECO:0000250" key="1"/>
<evidence type="ECO:0000255" key="2">
    <source>
        <dbReference type="PROSITE-ProRule" id="PRU10009"/>
    </source>
</evidence>
<evidence type="ECO:0000256" key="3">
    <source>
        <dbReference type="SAM" id="MobiDB-lite"/>
    </source>
</evidence>
<evidence type="ECO:0000305" key="4"/>
<dbReference type="EC" id="1.2.1.12"/>
<dbReference type="EMBL" id="BC105381">
    <property type="protein sequence ID" value="AAI05382.1"/>
    <property type="molecule type" value="mRNA"/>
</dbReference>
<dbReference type="RefSeq" id="NP_001035642.1">
    <property type="nucleotide sequence ID" value="NM_001040552.2"/>
</dbReference>
<dbReference type="SMR" id="Q2KJE5"/>
<dbReference type="FunCoup" id="Q2KJE5">
    <property type="interactions" value="58"/>
</dbReference>
<dbReference type="STRING" id="9913.ENSBTAP00000021166"/>
<dbReference type="PaxDb" id="9913-ENSBTAP00000021166"/>
<dbReference type="PeptideAtlas" id="Q2KJE5"/>
<dbReference type="GeneID" id="532231"/>
<dbReference type="KEGG" id="bta:532231"/>
<dbReference type="CTD" id="26330"/>
<dbReference type="VEuPathDB" id="HostDB:ENSBTAG00000015917"/>
<dbReference type="eggNOG" id="KOG0657">
    <property type="taxonomic scope" value="Eukaryota"/>
</dbReference>
<dbReference type="HOGENOM" id="CLU_030140_0_3_1"/>
<dbReference type="InParanoid" id="Q2KJE5"/>
<dbReference type="OMA" id="ENMVKIM"/>
<dbReference type="OrthoDB" id="1152826at2759"/>
<dbReference type="TreeFam" id="TF300533"/>
<dbReference type="BRENDA" id="1.2.1.12">
    <property type="organism ID" value="908"/>
</dbReference>
<dbReference type="Reactome" id="R-BTA-70171">
    <property type="pathway name" value="Glycolysis"/>
</dbReference>
<dbReference type="Reactome" id="R-BTA-70263">
    <property type="pathway name" value="Gluconeogenesis"/>
</dbReference>
<dbReference type="UniPathway" id="UPA00109">
    <property type="reaction ID" value="UER00184"/>
</dbReference>
<dbReference type="Proteomes" id="UP000009136">
    <property type="component" value="Chromosome 18"/>
</dbReference>
<dbReference type="Bgee" id="ENSBTAG00000015917">
    <property type="expression patterns" value="Expressed in spermatid and 106 other cell types or tissues"/>
</dbReference>
<dbReference type="GO" id="GO:0005829">
    <property type="term" value="C:cytosol"/>
    <property type="evidence" value="ECO:0000318"/>
    <property type="project" value="GO_Central"/>
</dbReference>
<dbReference type="GO" id="GO:0004365">
    <property type="term" value="F:glyceraldehyde-3-phosphate dehydrogenase (NAD+) (phosphorylating) activity"/>
    <property type="evidence" value="ECO:0000318"/>
    <property type="project" value="GO_Central"/>
</dbReference>
<dbReference type="GO" id="GO:0051287">
    <property type="term" value="F:NAD binding"/>
    <property type="evidence" value="ECO:0007669"/>
    <property type="project" value="InterPro"/>
</dbReference>
<dbReference type="GO" id="GO:0050661">
    <property type="term" value="F:NADP binding"/>
    <property type="evidence" value="ECO:0007669"/>
    <property type="project" value="InterPro"/>
</dbReference>
<dbReference type="GO" id="GO:0006006">
    <property type="term" value="P:glucose metabolic process"/>
    <property type="evidence" value="ECO:0007669"/>
    <property type="project" value="InterPro"/>
</dbReference>
<dbReference type="GO" id="GO:0006096">
    <property type="term" value="P:glycolytic process"/>
    <property type="evidence" value="ECO:0000318"/>
    <property type="project" value="GO_Central"/>
</dbReference>
<dbReference type="CDD" id="cd18126">
    <property type="entry name" value="GAPDH_I_C"/>
    <property type="match status" value="1"/>
</dbReference>
<dbReference type="CDD" id="cd05214">
    <property type="entry name" value="GAPDH_I_N"/>
    <property type="match status" value="1"/>
</dbReference>
<dbReference type="FunFam" id="3.30.360.10:FF:000001">
    <property type="entry name" value="Glyceraldehyde-3-phosphate dehydrogenase"/>
    <property type="match status" value="1"/>
</dbReference>
<dbReference type="FunFam" id="3.40.50.720:FF:000020">
    <property type="entry name" value="Glyceraldehyde-3-phosphate dehydrogenase"/>
    <property type="match status" value="1"/>
</dbReference>
<dbReference type="Gene3D" id="3.30.360.10">
    <property type="entry name" value="Dihydrodipicolinate Reductase, domain 2"/>
    <property type="match status" value="1"/>
</dbReference>
<dbReference type="Gene3D" id="3.40.50.720">
    <property type="entry name" value="NAD(P)-binding Rossmann-like Domain"/>
    <property type="match status" value="1"/>
</dbReference>
<dbReference type="InterPro" id="IPR020831">
    <property type="entry name" value="GlycerAld/Erythrose_P_DH"/>
</dbReference>
<dbReference type="InterPro" id="IPR020830">
    <property type="entry name" value="GlycerAld_3-P_DH_AS"/>
</dbReference>
<dbReference type="InterPro" id="IPR020829">
    <property type="entry name" value="GlycerAld_3-P_DH_cat"/>
</dbReference>
<dbReference type="InterPro" id="IPR020828">
    <property type="entry name" value="GlycerAld_3-P_DH_NAD(P)-bd"/>
</dbReference>
<dbReference type="InterPro" id="IPR006424">
    <property type="entry name" value="Glyceraldehyde-3-P_DH_1"/>
</dbReference>
<dbReference type="InterPro" id="IPR036291">
    <property type="entry name" value="NAD(P)-bd_dom_sf"/>
</dbReference>
<dbReference type="NCBIfam" id="TIGR01534">
    <property type="entry name" value="GAPDH-I"/>
    <property type="match status" value="1"/>
</dbReference>
<dbReference type="PANTHER" id="PTHR10836">
    <property type="entry name" value="GLYCERALDEHYDE 3-PHOSPHATE DEHYDROGENASE"/>
    <property type="match status" value="1"/>
</dbReference>
<dbReference type="PANTHER" id="PTHR10836:SF79">
    <property type="entry name" value="GLYCERALDEHYDE-3-PHOSPHATE DEHYDROGENASE, TESTIS-SPECIFIC"/>
    <property type="match status" value="1"/>
</dbReference>
<dbReference type="Pfam" id="PF02800">
    <property type="entry name" value="Gp_dh_C"/>
    <property type="match status" value="1"/>
</dbReference>
<dbReference type="Pfam" id="PF00044">
    <property type="entry name" value="Gp_dh_N"/>
    <property type="match status" value="1"/>
</dbReference>
<dbReference type="PIRSF" id="PIRSF000149">
    <property type="entry name" value="GAP_DH"/>
    <property type="match status" value="1"/>
</dbReference>
<dbReference type="PRINTS" id="PR00078">
    <property type="entry name" value="G3PDHDRGNASE"/>
</dbReference>
<dbReference type="SMART" id="SM00846">
    <property type="entry name" value="Gp_dh_N"/>
    <property type="match status" value="1"/>
</dbReference>
<dbReference type="SUPFAM" id="SSF55347">
    <property type="entry name" value="Glyceraldehyde-3-phosphate dehydrogenase-like, C-terminal domain"/>
    <property type="match status" value="1"/>
</dbReference>
<dbReference type="SUPFAM" id="SSF51735">
    <property type="entry name" value="NAD(P)-binding Rossmann-fold domains"/>
    <property type="match status" value="1"/>
</dbReference>
<dbReference type="PROSITE" id="PS00071">
    <property type="entry name" value="GAPDH"/>
    <property type="match status" value="1"/>
</dbReference>
<keyword id="KW-0963">Cytoplasm</keyword>
<keyword id="KW-0324">Glycolysis</keyword>
<keyword id="KW-0520">NAD</keyword>
<keyword id="KW-0560">Oxidoreductase</keyword>
<keyword id="KW-1185">Reference proteome</keyword>
<gene>
    <name type="primary">GAPDHS</name>
</gene>
<accession>Q2KJE5</accession>
<comment type="function">
    <text evidence="1">May play an important role in regulating the switch between different pathways for energy production during spermiogenesis and in the spermatozoon. Required for sperm motility and male fertility (By similarity).</text>
</comment>
<comment type="catalytic activity">
    <reaction evidence="2">
        <text>D-glyceraldehyde 3-phosphate + phosphate + NAD(+) = (2R)-3-phospho-glyceroyl phosphate + NADH + H(+)</text>
        <dbReference type="Rhea" id="RHEA:10300"/>
        <dbReference type="ChEBI" id="CHEBI:15378"/>
        <dbReference type="ChEBI" id="CHEBI:43474"/>
        <dbReference type="ChEBI" id="CHEBI:57540"/>
        <dbReference type="ChEBI" id="CHEBI:57604"/>
        <dbReference type="ChEBI" id="CHEBI:57945"/>
        <dbReference type="ChEBI" id="CHEBI:59776"/>
        <dbReference type="EC" id="1.2.1.12"/>
    </reaction>
</comment>
<comment type="pathway">
    <text>Carbohydrate degradation; glycolysis; pyruvate from D-glyceraldehyde 3-phosphate: step 1/5.</text>
</comment>
<comment type="subunit">
    <text evidence="1">Homotetramer.</text>
</comment>
<comment type="subcellular location">
    <subcellularLocation>
        <location evidence="1">Cytoplasm</location>
    </subcellularLocation>
</comment>
<comment type="domain">
    <text evidence="1">The testis-specific N-terminal extension mediates tight association with the cytoskeletal fibrous sheath of the spermatozoa flagellum, possibly via interchain disulfide-bonding of Cys-21 with sheath components.</text>
</comment>
<comment type="similarity">
    <text evidence="4">Belongs to the glyceraldehyde-3-phosphate dehydrogenase family.</text>
</comment>
<protein>
    <recommendedName>
        <fullName>Glyceraldehyde-3-phosphate dehydrogenase, testis-specific</fullName>
        <ecNumber>1.2.1.12</ecNumber>
    </recommendedName>
    <alternativeName>
        <fullName>Spermatogenic glyceraldehyde-3-phosphate dehydrogenase</fullName>
    </alternativeName>
</protein>
<feature type="chain" id="PRO_0000286175" description="Glyceraldehyde-3-phosphate dehydrogenase, testis-specific">
    <location>
        <begin position="1"/>
        <end position="395"/>
    </location>
</feature>
<feature type="region of interest" description="Testis-specific N-terminal extension" evidence="1">
    <location>
        <begin position="1"/>
        <end position="60"/>
    </location>
</feature>
<feature type="region of interest" description="Disordered" evidence="3">
    <location>
        <begin position="19"/>
        <end position="59"/>
    </location>
</feature>
<feature type="compositionally biased region" description="Pro residues" evidence="3">
    <location>
        <begin position="31"/>
        <end position="41"/>
    </location>
</feature>
<feature type="compositionally biased region" description="Pro residues" evidence="3">
    <location>
        <begin position="48"/>
        <end position="57"/>
    </location>
</feature>
<feature type="active site" description="Nucleophile" evidence="2">
    <location>
        <position position="211"/>
    </location>
</feature>
<feature type="binding site" evidence="1">
    <location>
        <begin position="72"/>
        <end position="73"/>
    </location>
    <ligand>
        <name>NAD(+)</name>
        <dbReference type="ChEBI" id="CHEBI:57540"/>
    </ligand>
</feature>
<feature type="binding site" evidence="1">
    <location>
        <position position="93"/>
    </location>
    <ligand>
        <name>NAD(+)</name>
        <dbReference type="ChEBI" id="CHEBI:57540"/>
    </ligand>
</feature>
<feature type="binding site" evidence="1">
    <location>
        <position position="138"/>
    </location>
    <ligand>
        <name>NAD(+)</name>
        <dbReference type="ChEBI" id="CHEBI:57540"/>
    </ligand>
</feature>
<feature type="binding site" evidence="1">
    <location>
        <begin position="210"/>
        <end position="212"/>
    </location>
    <ligand>
        <name>D-glyceraldehyde 3-phosphate</name>
        <dbReference type="ChEBI" id="CHEBI:59776"/>
    </ligand>
</feature>
<feature type="binding site" evidence="1">
    <location>
        <position position="241"/>
    </location>
    <ligand>
        <name>D-glyceraldehyde 3-phosphate</name>
        <dbReference type="ChEBI" id="CHEBI:59776"/>
    </ligand>
</feature>
<feature type="binding site" evidence="1">
    <location>
        <begin position="270"/>
        <end position="271"/>
    </location>
    <ligand>
        <name>D-glyceraldehyde 3-phosphate</name>
        <dbReference type="ChEBI" id="CHEBI:59776"/>
    </ligand>
</feature>
<feature type="binding site" evidence="1">
    <location>
        <position position="293"/>
    </location>
    <ligand>
        <name>D-glyceraldehyde 3-phosphate</name>
        <dbReference type="ChEBI" id="CHEBI:59776"/>
    </ligand>
</feature>
<feature type="binding site" evidence="1">
    <location>
        <position position="375"/>
    </location>
    <ligand>
        <name>NAD(+)</name>
        <dbReference type="ChEBI" id="CHEBI:57540"/>
    </ligand>
</feature>
<feature type="site" description="Activates thiol group during catalysis" evidence="1">
    <location>
        <position position="238"/>
    </location>
</feature>
<sequence length="395" mass="43288">MSKRDIVLTNVTVVQLLRQPCPEPRVEAEPEPPAQPQPQPEPIKEEVPPPPPPPPAPKKVRELIVGINGFGRIGRLVLRACMEKGVKVVAVNDPFIDLEYMVYMFKYDSTHGRYKGNVEHKKGQLVVDNNEISVFQCKQPKEIPWKSVGSPFVVEATGVYLSLEETKAHIEAGAQRVVICAPSPDAPMFVMGVNEKEYNPSSMKIVSNASCTTNCLAPLAKVIHERFGILEGLMTTVHSYTATQKTVDGPSKKAWRDGRGAHQNIIPASTGAAKAVGKVIPDLKGKLTGMAFRVPTPDVSVVDLTCRLAQPTPYSAIKDAIKAAAKGPMAGILAYTEDEVVSTDFLSDTHSSIFDAKAGIALNDNFVKLISWYDNEYGYSNRVVDLVRYMFSRDK</sequence>
<proteinExistence type="evidence at transcript level"/>
<organism>
    <name type="scientific">Bos taurus</name>
    <name type="common">Bovine</name>
    <dbReference type="NCBI Taxonomy" id="9913"/>
    <lineage>
        <taxon>Eukaryota</taxon>
        <taxon>Metazoa</taxon>
        <taxon>Chordata</taxon>
        <taxon>Craniata</taxon>
        <taxon>Vertebrata</taxon>
        <taxon>Euteleostomi</taxon>
        <taxon>Mammalia</taxon>
        <taxon>Eutheria</taxon>
        <taxon>Laurasiatheria</taxon>
        <taxon>Artiodactyla</taxon>
        <taxon>Ruminantia</taxon>
        <taxon>Pecora</taxon>
        <taxon>Bovidae</taxon>
        <taxon>Bovinae</taxon>
        <taxon>Bos</taxon>
    </lineage>
</organism>
<name>G3PT_BOVIN</name>
<reference key="1">
    <citation type="submission" date="2005-09" db="EMBL/GenBank/DDBJ databases">
        <authorList>
            <consortium name="NIH - Mammalian Gene Collection (MGC) project"/>
        </authorList>
    </citation>
    <scope>NUCLEOTIDE SEQUENCE [LARGE SCALE MRNA]</scope>
    <source>
        <strain>Hereford</strain>
        <tissue>Testis</tissue>
    </source>
</reference>